<protein>
    <recommendedName>
        <fullName>Signal peptidase complex catalytic subunit SEC11</fullName>
        <ecNumber evidence="1">3.4.21.89</ecNumber>
    </recommendedName>
    <alternativeName>
        <fullName>Signal peptidase I</fullName>
    </alternativeName>
</protein>
<reference key="1">
    <citation type="journal article" date="2009" name="Genome Res.">
        <title>Comparative genomic analyses of the human fungal pathogens Coccidioides and their relatives.</title>
        <authorList>
            <person name="Sharpton T.J."/>
            <person name="Stajich J.E."/>
            <person name="Rounsley S.D."/>
            <person name="Gardner M.J."/>
            <person name="Wortman J.R."/>
            <person name="Jordar V.S."/>
            <person name="Maiti R."/>
            <person name="Kodira C.D."/>
            <person name="Neafsey D.E."/>
            <person name="Zeng Q."/>
            <person name="Hung C.-Y."/>
            <person name="McMahan C."/>
            <person name="Muszewska A."/>
            <person name="Grynberg M."/>
            <person name="Mandel M.A."/>
            <person name="Kellner E.M."/>
            <person name="Barker B.M."/>
            <person name="Galgiani J.N."/>
            <person name="Orbach M.J."/>
            <person name="Kirkland T.N."/>
            <person name="Cole G.T."/>
            <person name="Henn M.R."/>
            <person name="Birren B.W."/>
            <person name="Taylor J.W."/>
        </authorList>
    </citation>
    <scope>NUCLEOTIDE SEQUENCE [LARGE SCALE GENOMIC DNA]</scope>
    <source>
        <strain>C735</strain>
    </source>
</reference>
<evidence type="ECO:0000250" key="1">
    <source>
        <dbReference type="UniProtKB" id="P15367"/>
    </source>
</evidence>
<evidence type="ECO:0000250" key="2">
    <source>
        <dbReference type="UniProtKB" id="P67812"/>
    </source>
</evidence>
<evidence type="ECO:0000255" key="3"/>
<evidence type="ECO:0000305" key="4"/>
<keyword id="KW-0256">Endoplasmic reticulum</keyword>
<keyword id="KW-0325">Glycoprotein</keyword>
<keyword id="KW-0378">Hydrolase</keyword>
<keyword id="KW-0472">Membrane</keyword>
<keyword id="KW-0645">Protease</keyword>
<keyword id="KW-0735">Signal-anchor</keyword>
<keyword id="KW-0812">Transmembrane</keyword>
<keyword id="KW-1133">Transmembrane helix</keyword>
<gene>
    <name type="primary">SEC11</name>
    <name type="ORF">CPC735_007680</name>
</gene>
<dbReference type="EC" id="3.4.21.89" evidence="1"/>
<dbReference type="EMBL" id="ACFW01000030">
    <property type="protein sequence ID" value="EER26595.1"/>
    <property type="molecule type" value="Genomic_DNA"/>
</dbReference>
<dbReference type="RefSeq" id="XP_003068740.1">
    <property type="nucleotide sequence ID" value="XM_003068694.1"/>
</dbReference>
<dbReference type="SMR" id="C5PA33"/>
<dbReference type="MEROPS" id="S26.010"/>
<dbReference type="GlyCosmos" id="C5PA33">
    <property type="glycosylation" value="1 site, No reported glycans"/>
</dbReference>
<dbReference type="GeneID" id="9694223"/>
<dbReference type="KEGG" id="cpw:9694223"/>
<dbReference type="VEuPathDB" id="FungiDB:CPC735_007680"/>
<dbReference type="HOGENOM" id="CLU_089996_0_0_1"/>
<dbReference type="OrthoDB" id="10257561at2759"/>
<dbReference type="Proteomes" id="UP000009084">
    <property type="component" value="Unassembled WGS sequence"/>
</dbReference>
<dbReference type="GO" id="GO:0005787">
    <property type="term" value="C:signal peptidase complex"/>
    <property type="evidence" value="ECO:0007669"/>
    <property type="project" value="TreeGrafter"/>
</dbReference>
<dbReference type="GO" id="GO:0004252">
    <property type="term" value="F:serine-type endopeptidase activity"/>
    <property type="evidence" value="ECO:0007669"/>
    <property type="project" value="UniProtKB-EC"/>
</dbReference>
<dbReference type="GO" id="GO:0006465">
    <property type="term" value="P:signal peptide processing"/>
    <property type="evidence" value="ECO:0007669"/>
    <property type="project" value="InterPro"/>
</dbReference>
<dbReference type="CDD" id="cd06530">
    <property type="entry name" value="S26_SPase_I"/>
    <property type="match status" value="1"/>
</dbReference>
<dbReference type="InterPro" id="IPR036286">
    <property type="entry name" value="LexA/Signal_pep-like_sf"/>
</dbReference>
<dbReference type="InterPro" id="IPR019756">
    <property type="entry name" value="Pept_S26A_signal_pept_1_Ser-AS"/>
</dbReference>
<dbReference type="InterPro" id="IPR019533">
    <property type="entry name" value="Peptidase_S26"/>
</dbReference>
<dbReference type="InterPro" id="IPR001733">
    <property type="entry name" value="Peptidase_S26B"/>
</dbReference>
<dbReference type="NCBIfam" id="TIGR02228">
    <property type="entry name" value="sigpep_I_arch"/>
    <property type="match status" value="1"/>
</dbReference>
<dbReference type="PANTHER" id="PTHR10806">
    <property type="entry name" value="SIGNAL PEPTIDASE COMPLEX CATALYTIC SUBUNIT SEC11"/>
    <property type="match status" value="1"/>
</dbReference>
<dbReference type="PANTHER" id="PTHR10806:SF6">
    <property type="entry name" value="SIGNAL PEPTIDASE COMPLEX CATALYTIC SUBUNIT SEC11"/>
    <property type="match status" value="1"/>
</dbReference>
<dbReference type="SUPFAM" id="SSF51306">
    <property type="entry name" value="LexA/Signal peptidase"/>
    <property type="match status" value="1"/>
</dbReference>
<dbReference type="PROSITE" id="PS00501">
    <property type="entry name" value="SPASE_I_1"/>
    <property type="match status" value="1"/>
</dbReference>
<name>SEC11_COCP7</name>
<sequence length="210" mass="23167">MLAGLSPHLSNLRRSLTQVLNFALVLSTAFMMWKGLSIYTNSSSPIVVVLSGSMEPAFQRGDLLFLWNRSPRAEVGEIVVYNVRGKDIPIVHRVVRAFGDDEKSPKETNGQKKKKVMSSVKKDSIAAGALHSDSALVSHRILTKGDNNIADDTELYAQGQDYLDRKLDLVGSVRGYIPAVGYVTIMLSEHPWLKTVLLGIMGAMVILQRE</sequence>
<accession>C5PA33</accession>
<organism>
    <name type="scientific">Coccidioides posadasii (strain C735)</name>
    <name type="common">Valley fever fungus</name>
    <dbReference type="NCBI Taxonomy" id="222929"/>
    <lineage>
        <taxon>Eukaryota</taxon>
        <taxon>Fungi</taxon>
        <taxon>Dikarya</taxon>
        <taxon>Ascomycota</taxon>
        <taxon>Pezizomycotina</taxon>
        <taxon>Eurotiomycetes</taxon>
        <taxon>Eurotiomycetidae</taxon>
        <taxon>Onygenales</taxon>
        <taxon>Onygenaceae</taxon>
        <taxon>Coccidioides</taxon>
    </lineage>
</organism>
<feature type="chain" id="PRO_0000412325" description="Signal peptidase complex catalytic subunit SEC11">
    <location>
        <begin position="1"/>
        <end position="210"/>
    </location>
</feature>
<feature type="topological domain" description="Cytoplasmic" evidence="3">
    <location>
        <begin position="1"/>
        <end position="21"/>
    </location>
</feature>
<feature type="transmembrane region" description="Helical; Signal-anchor for type II membrane protein" evidence="3">
    <location>
        <begin position="22"/>
        <end position="38"/>
    </location>
</feature>
<feature type="topological domain" description="Lumenal" evidence="3">
    <location>
        <begin position="39"/>
        <end position="210"/>
    </location>
</feature>
<feature type="region of interest" description="C-terminal short (CTS) helix" evidence="2">
    <location>
        <begin position="196"/>
        <end position="207"/>
    </location>
</feature>
<feature type="active site" description="Charge relay system" evidence="1">
    <location>
        <position position="53"/>
    </location>
</feature>
<feature type="active site" description="Charge relay system" evidence="1">
    <location>
        <position position="92"/>
    </location>
</feature>
<feature type="active site" description="Charge relay system" evidence="1">
    <location>
        <position position="152"/>
    </location>
</feature>
<feature type="glycosylation site" description="N-linked (GlcNAc...) asparagine" evidence="3">
    <location>
        <position position="41"/>
    </location>
</feature>
<comment type="function">
    <text evidence="1 2">Catalytic component of the signal peptidase complex (SPC) which catalyzes the cleavage of N-terminal signal sequences from nascent proteins as they are translocated into the lumen of the endoplasmic reticulum (By similarity). Specifically cleaves N-terminal signal peptides that contain a hydrophobic alpha-helix (h-region) shorter than 18-20 amino acids (By similarity).</text>
</comment>
<comment type="catalytic activity">
    <reaction evidence="1">
        <text>Cleavage of hydrophobic, N-terminal signal or leader sequences from secreted and periplasmic proteins.</text>
        <dbReference type="EC" id="3.4.21.89"/>
    </reaction>
</comment>
<comment type="subunit">
    <text evidence="1 2">Component of the signal peptidase complex (SPC) composed of a catalytic subunit SEC11 and three accessory subunits SPC1, SPC2 and SPC3 (By similarity). The complex induces a local thinning of the ER membrane which is used to measure the length of the signal peptide (SP) h-region of protein substrates. This ensures the selectivity of the complex towards h-regions shorter than 18-20 amino acids (By similarity). SPC associates with the translocon complex (By similarity).</text>
</comment>
<comment type="subcellular location">
    <subcellularLocation>
        <location evidence="1">Endoplasmic reticulum membrane</location>
        <topology evidence="1">Single-pass type II membrane protein</topology>
    </subcellularLocation>
</comment>
<comment type="domain">
    <text evidence="2">The C-terminal short (CTS) helix is essential for catalytic activity. It may be accommodated as a transmembrane helix in the thinned membrane environment of the complex, similarly to the signal peptide in the complex substrates.</text>
</comment>
<comment type="similarity">
    <text evidence="4">Belongs to the peptidase S26B family.</text>
</comment>
<proteinExistence type="inferred from homology"/>